<keyword id="KW-0002">3D-structure</keyword>
<keyword id="KW-0131">Cell cycle</keyword>
<keyword id="KW-0963">Cytoplasm</keyword>
<keyword id="KW-0206">Cytoskeleton</keyword>
<keyword id="KW-0903">Direct protein sequencing</keyword>
<keyword id="KW-0227">DNA damage</keyword>
<keyword id="KW-0233">DNA recombination</keyword>
<keyword id="KW-0234">DNA repair</keyword>
<keyword id="KW-0238">DNA-binding</keyword>
<keyword id="KW-0539">Nucleus</keyword>
<keyword id="KW-0597">Phosphoprotein</keyword>
<keyword id="KW-1185">Reference proteome</keyword>
<keyword id="KW-0677">Repeat</keyword>
<keyword id="KW-0043">Tumor suppressor</keyword>
<keyword id="KW-0832">Ubl conjugation</keyword>
<sequence>MPVEYKRRPTFWEIFKARCSTADLGPISLNWFEELSSEAPPYNSEPPEESEYKPHGYEPQLFKTPQRNPPYHQFASTPIMFKERSQTLPLDQSPFRELGKVVASSKHKTHSKKKTKVDPVVDVASPPLKSCLSESPLTLRCTQAVLQREKPVVSGSLFYTPKLKEGQTPKPISESLGVEVDPDMSWTSSLATPPTLSSTVLIARDEEARSSVTPADSPATLKSCFSNHNESPQKNDRSVPSVIDSENKNQQEAFSQGLGKMLGDSSGKRNSFKDCLRKPIPNILEDGETAVDTSEEDSFSLCFPKRRTRNLQKMRMGKTRKKIFSETRTDELSEEARRQTDDKNSFVFEMELRESDPLDPGVTSQKPFYSQNEEICNEAVQCSDSRWSQSNLSGLNETQTGKITLPHISSHSQNISEDFIDMKKEGTGSITSEKSLPHISSLPEPEKMFSEETVVDKEHEGQHFESLEDSIAGKQMVSRTSQAACLSPSIRKSIFKMREPLDETLGTVFSDSMTNSTFTEEHEASACGLGILTACSQREDSICPSSVDTGSWPTTLTDTSATVKNAGLISTLKNKKRKFIYSVSDDASLQGKKLQTHRQLELTNLSAQLEASAFEVPLTFTNVNSGIPDSSDKKRCLPNDPEEPSLTNSFGTATSKEISYIHALISQDLNDKEAIVIEEKPQPYTAREADFLLCLPERTCENDQKSPKVSNGKEKVLVSACLPSAVQLSSISFESQENPLGDHNGTSTLKLTPSSKLPLSKADMVSREKMCKMPEKLQCESCKVNIELSKNILEVNEICILSENSKTPGLLPPGENIIEVASSMKSQFNQNAKIVIQKDQKGSPFISEVAVNMNSEELFPDSGNNFAFQVTNKCNKPDLGSSVELQEEDLSHTQGPSLKNSPMAVDEDVDDAHAAQVLITKDSDSLAVVHDYTEKSRNNIEQHQKGTEDKDFKSNSSLNMKSDGNSDCSDKWSEFLDPVLNHNFGGSFRTASNKEIKLSEHNVKKSKMFFKDIEEQYPTRLACIDIVNTLPLANQKKLSEPHIFDLKSVTTVSTQSHNQSSVSHEDTDTAPQMLSSKQDFHSNNLTTSQKAEITELSTILEESGSQFEFTQFRKPSHIAQNTSEVPGNQMVVLSTASKEWKDTDLHLPVDPSVGQTDHSKQFEGSAGVKQSFPHLLEDTCNKNTSCFLPNINEMEFGGFCSALGTKLSVSNEALRKAMKLFSDIENSEEPSAKVGPRGFSSSAHHDSVASVFKIKKQNTEKSFDEKSSKCQVTLQNNIEMTTCIFVGRNPEKYIKNTKHEDSYTSSQRNNLENSDGSMSSTSGPVYIHKGDSDLPADQGSKCPESCTQYAREENTQIKENISDLTCLEIMKAEETCMKSSDKKQLPSDKMEQNIKEFNISFQTASGKNTRVSKESLNKSVNIFNRETDELTVISDSLNSKILHGINKDKMHTSCHKKAISIKKVFEDHFPIVTVSQLPAQQHPEYEIESTKEPTLLSFHTASGKKVKIMQESLDKVKNLFDETQYVRKTASFSQGSKPLKDSKKELTLAYEKIEVTASKCEEMQNFVSKETEMLPQQNYHMYRQTENLKTSNGTSSKVQENIENNVEKNPRICCICQSSYPVTEDSALAYYTEDSRKTCVRESSLSKGRKWLREQGDKLGTRNTIKIECVKEHTEDFAGNASYEHSLVIIRTEIDTNHVSENQVSTLLSDPNVCHSYLSQSSFCHCDDMHNDSGYFLKNKIDSDVPPDMKNAEGNTISPRVSATKERNLHPQTINEYCVQKLETNTSPHANKDVAIDPSLLDSRNCKVGSLVFITAHSQETERTKEIVTDNCYKIVEQNRQSKPDTCQTSCHKVLDDSKDFICPSSSGDVCINSRKDSFCPHNEQILQHNQSMSGLKKAATPPVGLETWDTSKSIREPPQAAHPSRTYGIFSTASGKAIQVSDASLEKARQVFSEMDGDAKQLSSMVSLEGNEKPHHSVKRENSVVHSTQGVLSLPKPLPGNVNSSVFSGFSTAGGKLVTVSESALHKVKGMLEEFDLIRTEHTLQHSPIPEDVSKILPQPCAEIRTPEYPVNSKLQKTYNDKSSLPSNYKESGSSGNTQSIEVSLQLSQMERNQDTQLVLGTKVSHSKANLLGKEQTLPQNIKVKTDEMKTFSDVPVKTNVGEYYSKESENYFETEAVESAKAFMEDDELTDSEQTHAKCSLFTCPQNETLFNSRTRKRGGVTVDAVGQPPIKRSLLNEFDRIIESKGKSLTPSKSTPDGTVKDRSLFTHHMSLEPVTCGPFCSSKERQGAQRPHLTSPAQELLSKGHPWRHSALEKSPSSPIVSILPAHDVSATRTERTRHSGKSTKVFVPPFKMKSQFHGDEHFNSKNVNLEGKNQKSTDGDREDGNDSHVRQFNKDLMSSLQSARDLQDMRIKNKERRHLRLQPGSLYLTKSSTLPRISLQAAVGDRAPSACSPKQLYIYGVSKECINVNSKNAEYFQFDIQDHFGKEDLCAGKGFQLADGGWLIPSNDGKAGKEEFYRALCDTPGVDPKLISSIWVANHYRWIVWKLAAMEFAFPKEFANRCLNPERVLLQLKYRYDVEIDNSRRSALKKILERDDTAAKTLVLCISDIISPSTKVSETSGGKTSGEDANKVDTIELTDGWYAVRAQLDPPLMALVKSGKLTVGQKIITQGAELVGSPDACAPLEAPDSLRLKISANSTRPARWHSRLGFFRDPRPFPLPLSSLFSDGGNVGCVDIIVQRVYPLQWVEKTVSGLYIFRSEREEEKEALRFAEAQQKKLEALFTKVHTEFKDHEEDTTQRCVLSRTLTRQQVHALQDGAELYAAVQYASDPDHLEACFSEEQLRALNNYRQMLNDKKQARIQSEFRKALESAEKEEGLSRDVTTVWKLRVTSYKKKEKSALLSIWRPSSDLSSLLTEGKRYRIYHLAVSKSKSKFERPSIQLTATKRTQYQQLPVSSETLLQVYQPRESLHFSRLSDPAFQPPCSEVDVVGVVVSVVKPIGLAPLVYLSDECLNLLVVKFGIDLNEDIKPRVLIAASNLQCQPESTSGVPTLFAGHFSIFSASPKEAYFQEKVNNLKHAIENIDTFYKEAEKKLIHVLEGDSPKWSTPNKDPTREPHAASTCCASDLLGSGGQFLRISPTGQQSYQSPLSHCTLKGKSMPLAHSAQMAAKSWSGENEIDDPKTCRKRRALDFLSRLPLPSPVSPICTFVSPAAQKAFQPPRSCGTKYATPIKKEPSSPRRRTPFQKTSGVSLPDCDSVADEELALLSTQALTPDSVGGNEQAFPGDSTRNPQPAQRPDQQVGPRSRKESLRDCRGDSSEKLAVES</sequence>
<organism>
    <name type="scientific">Mus musculus</name>
    <name type="common">Mouse</name>
    <dbReference type="NCBI Taxonomy" id="10090"/>
    <lineage>
        <taxon>Eukaryota</taxon>
        <taxon>Metazoa</taxon>
        <taxon>Chordata</taxon>
        <taxon>Craniata</taxon>
        <taxon>Vertebrata</taxon>
        <taxon>Euteleostomi</taxon>
        <taxon>Mammalia</taxon>
        <taxon>Eutheria</taxon>
        <taxon>Euarchontoglires</taxon>
        <taxon>Glires</taxon>
        <taxon>Rodentia</taxon>
        <taxon>Myomorpha</taxon>
        <taxon>Muroidea</taxon>
        <taxon>Muridae</taxon>
        <taxon>Murinae</taxon>
        <taxon>Mus</taxon>
        <taxon>Mus</taxon>
    </lineage>
</organism>
<name>BRCA2_MOUSE</name>
<accession>P97929</accession>
<accession>F8VPU5</accession>
<accession>O35922</accession>
<accession>P97383</accession>
<reference key="1">
    <citation type="journal article" date="1997" name="Hum. Mol. Genet.">
        <title>Cloning, chromosomal mapping and expression pattern of the mouse Brca2 gene.</title>
        <authorList>
            <person name="Connor F."/>
            <person name="Smith A."/>
            <person name="Wooster R."/>
            <person name="Stratton M."/>
            <person name="Dixon A."/>
            <person name="Campbell E."/>
            <person name="Tait T.M."/>
            <person name="Freeman T."/>
            <person name="Ashworth A."/>
        </authorList>
    </citation>
    <scope>NUCLEOTIDE SEQUENCE [MRNA]</scope>
    <source>
        <strain>129</strain>
    </source>
</reference>
<reference key="2">
    <citation type="journal article" date="1997" name="Genomics">
        <title>Murine Brca2: sequence, map position, and expression pattern.</title>
        <authorList>
            <person name="Sharan S.K."/>
            <person name="Bradley A."/>
        </authorList>
    </citation>
    <scope>NUCLEOTIDE SEQUENCE [MRNA]</scope>
    <source>
        <strain>C57BL/6J</strain>
    </source>
</reference>
<reference key="3">
    <citation type="journal article" date="1997" name="Cancer Res.">
        <title>Characterization of the rat and mouse homologues of the BRCA2 breast cancer susceptibility gene.</title>
        <authorList>
            <person name="McAllister K.A."/>
            <person name="Haugen-Strano A."/>
            <person name="Hagevik S."/>
            <person name="Brownlee H.A."/>
            <person name="Collins N.K."/>
            <person name="Futreal P.A."/>
            <person name="Bennett L.M."/>
            <person name="Wiseman R.W."/>
        </authorList>
    </citation>
    <scope>NUCLEOTIDE SEQUENCE [MRNA]</scope>
    <source>
        <strain>129/Sv</strain>
    </source>
</reference>
<reference key="4">
    <citation type="journal article" date="2009" name="PLoS Biol.">
        <title>Lineage-specific biology revealed by a finished genome assembly of the mouse.</title>
        <authorList>
            <person name="Church D.M."/>
            <person name="Goodstadt L."/>
            <person name="Hillier L.W."/>
            <person name="Zody M.C."/>
            <person name="Goldstein S."/>
            <person name="She X."/>
            <person name="Bult C.J."/>
            <person name="Agarwala R."/>
            <person name="Cherry J.L."/>
            <person name="DiCuccio M."/>
            <person name="Hlavina W."/>
            <person name="Kapustin Y."/>
            <person name="Meric P."/>
            <person name="Maglott D."/>
            <person name="Birtle Z."/>
            <person name="Marques A.C."/>
            <person name="Graves T."/>
            <person name="Zhou S."/>
            <person name="Teague B."/>
            <person name="Potamousis K."/>
            <person name="Churas C."/>
            <person name="Place M."/>
            <person name="Herschleb J."/>
            <person name="Runnheim R."/>
            <person name="Forrest D."/>
            <person name="Amos-Landgraf J."/>
            <person name="Schwartz D.C."/>
            <person name="Cheng Z."/>
            <person name="Lindblad-Toh K."/>
            <person name="Eichler E.E."/>
            <person name="Ponting C.P."/>
        </authorList>
    </citation>
    <scope>NUCLEOTIDE SEQUENCE [LARGE SCALE GENOMIC DNA]</scope>
    <source>
        <strain>C57BL/6J</strain>
    </source>
</reference>
<reference key="5">
    <citation type="journal article" date="1996" name="Proc. Natl. Acad. Sci. U.S.A.">
        <title>Brca2 is coordinately regulated with Brca1 during proliferation and differentiation in mammary epithelial cells.</title>
        <authorList>
            <person name="Rajan J.V."/>
            <person name="Wang M."/>
            <person name="Marquis S.T."/>
            <person name="Chodosh L.A."/>
        </authorList>
    </citation>
    <scope>NUCLEOTIDE SEQUENCE [MRNA] OF 18-200</scope>
</reference>
<reference key="6">
    <citation type="journal article" date="1997" name="Mamm. Genome">
        <title>Genetic mapping of the Brca2 breast cancer susceptibility gene on mouse chromosome 5.</title>
        <authorList>
            <person name="McAllister K.A."/>
            <person name="Ramachandran S."/>
            <person name="Haugen-Strano A."/>
            <person name="Fiedorek F.T. Jr."/>
            <person name="Wiseman R.W."/>
        </authorList>
    </citation>
    <scope>NUCLEOTIDE SEQUENCE [GENOMIC DNA / MRNA] OF 569-625</scope>
</reference>
<reference key="7">
    <citation type="submission" date="2009-01" db="UniProtKB">
        <authorList>
            <person name="Lubec G."/>
            <person name="Sunyer B."/>
            <person name="Chen W.-Q."/>
        </authorList>
    </citation>
    <scope>PROTEIN SEQUENCE OF 784-790</scope>
    <scope>IDENTIFICATION BY MASS SPECTROMETRY</scope>
    <source>
        <strain>OF1</strain>
        <tissue>Hippocampus</tissue>
    </source>
</reference>
<reference key="8">
    <citation type="journal article" date="2019" name="Cell Rep.">
        <title>HSF2BP Interacts with a Conserved Domain of BRCA2 and Is Required for Mouse Spermatogenesis.</title>
        <authorList>
            <person name="Brandsma I."/>
            <person name="Sato K."/>
            <person name="van Rossum-Fikkert S.E."/>
            <person name="van Vliet N."/>
            <person name="Sleddens E."/>
            <person name="Reuter M."/>
            <person name="Odijk H."/>
            <person name="van den Tempel N."/>
            <person name="Dekkers D.H.W."/>
            <person name="Bezstarosti K."/>
            <person name="Demmers J.A.A."/>
            <person name="Maas A."/>
            <person name="Lebbink J."/>
            <person name="Wyman C."/>
            <person name="Essers J."/>
            <person name="van Gent D.C."/>
            <person name="Baarends W.M."/>
            <person name="Knipscheer P."/>
            <person name="Kanaar R."/>
            <person name="Zelensky A.N."/>
        </authorList>
    </citation>
    <scope>INTERACTION WITH HSF2BP</scope>
</reference>
<reference key="9">
    <citation type="journal article" date="2019" name="Nat. Commun.">
        <title>A meiosis-specific BRCA2 binding protein recruits recombinases to DNA double-strand breaks to ensure homologous recombination.</title>
        <authorList>
            <person name="Zhang J."/>
            <person name="Fujiwara Y."/>
            <person name="Yamamoto S."/>
            <person name="Shibuya H."/>
        </authorList>
    </citation>
    <scope>INTERACTION WITH HSF2BP AND RAD51</scope>
</reference>
<reference key="10">
    <citation type="journal article" date="2020" name="Cell Rep.">
        <title>Meiosis-Specific C19orf57/4930432K21Rik/BRME1 Modulates Localization of RAD51 and DMC1 to DSBs in Mouse Meiotic Recombination.</title>
        <authorList>
            <person name="Takemoto K."/>
            <person name="Tani N."/>
            <person name="Takada-Horisawa Y."/>
            <person name="Fujimura S."/>
            <person name="Tanno N."/>
            <person name="Yamane M."/>
            <person name="Okamura K."/>
            <person name="Sugimoto M."/>
            <person name="Araki K."/>
            <person name="Ishiguro K.I."/>
        </authorList>
    </citation>
    <scope>INTERACTION WITH BRME1</scope>
</reference>
<reference key="11">
    <citation type="journal article" date="2020" name="Elife">
        <title>A missense in HSF2BP causing primary ovarian insufficiency affects meiotic recombination by its novel interactor C19ORF57/BRME1.</title>
        <authorList>
            <person name="Felipe-Medina N."/>
            <person name="Caburet S."/>
            <person name="Sanchez-Saez F."/>
            <person name="Condezo Y.B."/>
            <person name="de Rooij D.G."/>
            <person name="Gomez-H L."/>
            <person name="Garcia-Valiente R."/>
            <person name="Todeschini A.L."/>
            <person name="Duque P."/>
            <person name="Sanchez-Martin M.A."/>
            <person name="Shalev S.A."/>
            <person name="Llano E."/>
            <person name="Veitia R.A."/>
            <person name="Pendas A.M."/>
        </authorList>
    </citation>
    <scope>INTERACTION WITH HSF2BP AND BRME1</scope>
</reference>
<reference key="12">
    <citation type="journal article" date="2020" name="Nat. Commun.">
        <title>The BRCA2-MEILB2-BRME1 complex governs meiotic recombination and impairs the mitotic BRCA2-RAD51 function in cancer cells.</title>
        <authorList>
            <person name="Zhang J."/>
            <person name="Gurusaran M."/>
            <person name="Fujiwara Y."/>
            <person name="Zhang K."/>
            <person name="Echbarthi M."/>
            <person name="Vorontsov E."/>
            <person name="Guo R."/>
            <person name="Pendlebury D.F."/>
            <person name="Alam I."/>
            <person name="Livera G."/>
            <person name="Emmanuelle M."/>
            <person name="Wang P.J."/>
            <person name="Nandakumar J."/>
            <person name="Davies O.R."/>
            <person name="Shibuya H."/>
        </authorList>
    </citation>
    <scope>INTERACTION WITH HSF2BP; BRME1; SPATA22; MEIOB AND RAD51</scope>
    <scope>TISSUE SPECIFICITY</scope>
</reference>
<reference key="13">
    <citation type="journal article" date="2002" name="Science">
        <title>BRCA2 function in DNA binding and recombination from a BRCA2-DSS1-ssDNA structure.</title>
        <authorList>
            <person name="Yang H."/>
            <person name="Jeffrey P.D."/>
            <person name="Miller J."/>
            <person name="Kinnucan E."/>
            <person name="Sun Y."/>
            <person name="Thoma N.H."/>
            <person name="Zheng N."/>
            <person name="Chen P.L."/>
            <person name="Lee W.H."/>
            <person name="Pavletich N.P."/>
        </authorList>
    </citation>
    <scope>X-RAY CRYSTALLOGRAPHY (3.1 ANGSTROMS) OF 2378-3115 IN COMPLEX WITH SEM1</scope>
    <scope>INTERACTION WITH SEM1</scope>
</reference>
<feature type="chain" id="PRO_0000064985" description="Breast cancer type 2 susceptibility protein homolog">
    <location>
        <begin position="1"/>
        <end position="3329"/>
    </location>
</feature>
<feature type="repeat" description="BRCA2 1">
    <location>
        <begin position="981"/>
        <end position="1015"/>
    </location>
</feature>
<feature type="repeat" description="BRCA2 2">
    <location>
        <begin position="1192"/>
        <end position="1226"/>
    </location>
</feature>
<feature type="repeat" description="BRCA2 3">
    <location>
        <begin position="1394"/>
        <end position="1428"/>
    </location>
</feature>
<feature type="repeat" description="BRCA2 4">
    <location>
        <begin position="1491"/>
        <end position="1525"/>
    </location>
</feature>
<feature type="repeat" description="BRCA2 5">
    <location>
        <begin position="1623"/>
        <end position="1657"/>
    </location>
</feature>
<feature type="repeat" description="BRCA2 6">
    <location>
        <begin position="1924"/>
        <end position="1958"/>
    </location>
</feature>
<feature type="repeat" description="BRCA2 7">
    <location>
        <begin position="2004"/>
        <end position="2038"/>
    </location>
</feature>
<feature type="region of interest" description="Interaction with PALB2" evidence="1">
    <location>
        <begin position="1"/>
        <end position="40"/>
    </location>
</feature>
<feature type="region of interest" description="Disordered" evidence="4">
    <location>
        <begin position="37"/>
        <end position="69"/>
    </location>
</feature>
<feature type="region of interest" description="Disordered" evidence="4">
    <location>
        <begin position="207"/>
        <end position="241"/>
    </location>
</feature>
<feature type="region of interest" description="Interaction with NPM1" evidence="1">
    <location>
        <begin position="628"/>
        <end position="979"/>
    </location>
</feature>
<feature type="region of interest" description="Disordered" evidence="4">
    <location>
        <begin position="628"/>
        <end position="650"/>
    </location>
</feature>
<feature type="region of interest" description="Disordered" evidence="4">
    <location>
        <begin position="934"/>
        <end position="965"/>
    </location>
</feature>
<feature type="region of interest" description="Interaction with RAD51" evidence="6">
    <location>
        <begin position="982"/>
        <end position="2035"/>
    </location>
</feature>
<feature type="region of interest" description="Disordered" evidence="4">
    <location>
        <begin position="1296"/>
        <end position="1340"/>
    </location>
</feature>
<feature type="region of interest" description="Disordered" evidence="4">
    <location>
        <begin position="2073"/>
        <end position="2099"/>
    </location>
</feature>
<feature type="region of interest" description="Interaction with HSF2BP" evidence="6 8">
    <location>
        <begin position="2219"/>
        <end position="2285"/>
    </location>
</feature>
<feature type="region of interest" description="Interaction with FANCD2" evidence="1">
    <location>
        <begin position="2298"/>
        <end position="2466"/>
    </location>
</feature>
<feature type="region of interest" description="Disordered" evidence="4">
    <location>
        <begin position="2361"/>
        <end position="2393"/>
    </location>
</feature>
<feature type="region of interest" description="Interaction with SEM1" evidence="3">
    <location>
        <begin position="2402"/>
        <end position="2753"/>
    </location>
</feature>
<feature type="region of interest" description="Disordered" evidence="4">
    <location>
        <begin position="3221"/>
        <end position="3257"/>
    </location>
</feature>
<feature type="region of interest" description="Disordered" evidence="4">
    <location>
        <begin position="3273"/>
        <end position="3329"/>
    </location>
</feature>
<feature type="short sequence motif" description="Nuclear export signal; masked by interaction with SEM1" evidence="3">
    <location>
        <begin position="2603"/>
        <end position="2619"/>
    </location>
</feature>
<feature type="compositionally biased region" description="Basic and acidic residues" evidence="4">
    <location>
        <begin position="934"/>
        <end position="953"/>
    </location>
</feature>
<feature type="compositionally biased region" description="Polar residues" evidence="4">
    <location>
        <begin position="954"/>
        <end position="965"/>
    </location>
</feature>
<feature type="compositionally biased region" description="Polar residues" evidence="4">
    <location>
        <begin position="1303"/>
        <end position="1323"/>
    </location>
</feature>
<feature type="compositionally biased region" description="Polar residues" evidence="4">
    <location>
        <begin position="2074"/>
        <end position="2099"/>
    </location>
</feature>
<feature type="compositionally biased region" description="Basic and acidic residues" evidence="4">
    <location>
        <begin position="2377"/>
        <end position="2393"/>
    </location>
</feature>
<feature type="compositionally biased region" description="Basic and acidic residues" evidence="4">
    <location>
        <begin position="3309"/>
        <end position="3329"/>
    </location>
</feature>
<feature type="modified residue" description="Phosphoserine" evidence="3">
    <location>
        <position position="435"/>
    </location>
</feature>
<feature type="modified residue" description="Phosphoserine" evidence="3">
    <location>
        <position position="481"/>
    </location>
</feature>
<feature type="modified residue" description="Phosphoserine" evidence="3">
    <location>
        <position position="735"/>
    </location>
</feature>
<feature type="modified residue" description="Phosphoserine" evidence="3">
    <location>
        <position position="2048"/>
    </location>
</feature>
<feature type="modified residue" description="Phosphoserine; by CDK1 and CDK2" evidence="3">
    <location>
        <position position="3214"/>
    </location>
</feature>
<feature type="modified residue" description="Phosphoserine" evidence="3">
    <location>
        <position position="3241"/>
    </location>
</feature>
<feature type="sequence variant" description="In strain: C57BL/6 and 129/Sv.">
    <original>S</original>
    <variation>F</variation>
    <location>
        <position position="44"/>
    </location>
</feature>
<feature type="sequence variant" description="In strain: 129/Sv.">
    <original>T</original>
    <variation>P</variation>
    <location>
        <position position="340"/>
    </location>
</feature>
<feature type="sequence variant" description="In strain: C57BL/6.">
    <original>N</original>
    <variation>H</variation>
    <location>
        <position position="377"/>
    </location>
</feature>
<feature type="sequence variant" description="In strain: C57BL/6.">
    <original>H</original>
    <variation>P</variation>
    <location>
        <position position="407"/>
    </location>
</feature>
<feature type="sequence variant" description="In strain: C57BL/6.">
    <original>I</original>
    <variation>V</variation>
    <location>
        <position position="661"/>
    </location>
</feature>
<feature type="sequence variant" description="In strain: C57BL/6.">
    <original>P</original>
    <variation>H</variation>
    <location>
        <position position="739"/>
    </location>
</feature>
<feature type="sequence variant" description="In strain: C57BL/6.">
    <original>GF</original>
    <variation>RI</variation>
    <location>
        <begin position="1198"/>
        <end position="1199"/>
    </location>
</feature>
<feature type="sequence variant" description="In strain: C57BL/6.">
    <original>Q</original>
    <variation>P</variation>
    <location>
        <position position="1257"/>
    </location>
</feature>
<feature type="sequence variant" description="In strain: C57BL/6.">
    <original>Q</original>
    <variation>R</variation>
    <location>
        <position position="1392"/>
    </location>
</feature>
<feature type="sequence variant" description="In strain: C57BL/6.">
    <original>FD</original>
    <variation>CG</variation>
    <location>
        <begin position="1520"/>
        <end position="1521"/>
    </location>
</feature>
<feature type="sequence variant" description="In strain: C57BL/6.">
    <original>R</original>
    <variation>W</variation>
    <location>
        <position position="1583"/>
    </location>
</feature>
<feature type="sequence variant" description="In strain: C57BL/6.">
    <original>C</original>
    <variation>W</variation>
    <location>
        <position position="1613"/>
    </location>
</feature>
<feature type="sequence variant" description="In strain: C57BL/6.">
    <original>S</original>
    <variation>R</variation>
    <location>
        <position position="1686"/>
    </location>
</feature>
<feature type="sequence variant" description="In strain: 129/Sv.">
    <original>S</original>
    <variation>F</variation>
    <location>
        <position position="1799"/>
    </location>
</feature>
<feature type="sequence variant" description="In strain: C57BL/6.">
    <original>P</original>
    <variation>L</variation>
    <location>
        <position position="1881"/>
    </location>
</feature>
<feature type="sequence variant" description="In strain: 129/Sv.">
    <original>S</original>
    <variation>F</variation>
    <location>
        <position position="1894"/>
    </location>
</feature>
<feature type="sequence variant" description="In strain: C57BL/6.">
    <original>Q</original>
    <variation>K</variation>
    <location>
        <position position="2141"/>
    </location>
</feature>
<feature type="sequence variant" description="In strain: C57BL/6.">
    <original>S</original>
    <variation>R</variation>
    <location>
        <position position="2392"/>
    </location>
</feature>
<feature type="sequence variant" description="In strain: C57BL/6.">
    <original>K</original>
    <variation>Q</variation>
    <location>
        <position position="2605"/>
    </location>
</feature>
<feature type="sequence variant" description="In strain: C57BL/6.">
    <original>A</original>
    <variation>P</variation>
    <location>
        <position position="2648"/>
    </location>
</feature>
<feature type="sequence variant" description="In strain: 129/Sv.">
    <original>R</original>
    <variation>C</variation>
    <location>
        <position position="2717"/>
    </location>
</feature>
<feature type="sequence variant" description="In strain: 129/Sv.">
    <original>L</original>
    <variation>M</variation>
    <location>
        <position position="2729"/>
    </location>
</feature>
<feature type="sequence variant" description="In strain: C57BL/6.">
    <original>Q</original>
    <variation>H</variation>
    <location>
        <position position="2814"/>
    </location>
</feature>
<feature type="sequence variant" description="In strain: C57BL/6.">
    <original>A</original>
    <variation>P</variation>
    <location>
        <position position="2827"/>
    </location>
</feature>
<feature type="sequence variant" description="In strain: 129/Sv.">
    <original>S</original>
    <variation>I</variation>
    <location>
        <position position="2907"/>
    </location>
</feature>
<feature type="sequence variant" description="In strain: 129/Sv.">
    <original>H</original>
    <variation>L</variation>
    <location>
        <position position="2929"/>
    </location>
</feature>
<feature type="sequence variant" description="In strain: C57BL/6.">
    <original>A</original>
    <variation>G</variation>
    <location>
        <position position="3058"/>
    </location>
</feature>
<feature type="sequence variant" description="In strain: C57BL/6.">
    <original>A</original>
    <variation>G</variation>
    <location>
        <position position="3071"/>
    </location>
</feature>
<feature type="sequence variant" description="In strain: C57BL/6.">
    <original>K</original>
    <variation>E</variation>
    <location>
        <position position="3081"/>
    </location>
</feature>
<feature type="sequence variant" description="In strain: C57BL/6.">
    <original>T</original>
    <variation>S</variation>
    <location>
        <position position="3089"/>
    </location>
</feature>
<feature type="sequence variant" description="In strain: C57BL/6.">
    <original>DSPKW</original>
    <variation>SQSQV</variation>
    <location>
        <begin position="3105"/>
        <end position="3109"/>
    </location>
</feature>
<feature type="sequence variant" description="In strain: 129/Sv.">
    <original>A</original>
    <variation>G</variation>
    <location>
        <position position="3220"/>
    </location>
</feature>
<feature type="sequence variant" description="In strain: 129/Sv.">
    <original>E</original>
    <variation>K</variation>
    <location>
        <position position="3238"/>
    </location>
</feature>
<feature type="sequence variant" description="In strain: C57BL/6.">
    <location>
        <position position="3243"/>
    </location>
</feature>
<feature type="sequence variant" description="In strain: 129/Sv.">
    <original>R</original>
    <variation>K</variation>
    <location>
        <position position="3245"/>
    </location>
</feature>
<feature type="sequence conflict" description="In Ref. 1; AAB48306." evidence="11" ref="1">
    <original>L</original>
    <variation>I</variation>
    <location>
        <position position="1038"/>
    </location>
</feature>
<feature type="helix" evidence="13">
    <location>
        <begin position="2404"/>
        <end position="2420"/>
    </location>
</feature>
<feature type="helix" evidence="13">
    <location>
        <begin position="2430"/>
        <end position="2435"/>
    </location>
</feature>
<feature type="helix" evidence="13">
    <location>
        <begin position="2446"/>
        <end position="2448"/>
    </location>
</feature>
<feature type="strand" evidence="14">
    <location>
        <begin position="2456"/>
        <end position="2458"/>
    </location>
</feature>
<feature type="strand" evidence="13">
    <location>
        <begin position="2462"/>
        <end position="2464"/>
    </location>
</feature>
<feature type="strand" evidence="13">
    <location>
        <begin position="2468"/>
        <end position="2472"/>
    </location>
</feature>
<feature type="turn" evidence="13">
    <location>
        <begin position="2475"/>
        <end position="2480"/>
    </location>
</feature>
<feature type="helix" evidence="13">
    <location>
        <begin position="2486"/>
        <end position="2489"/>
    </location>
</feature>
<feature type="turn" evidence="13">
    <location>
        <begin position="2490"/>
        <end position="2492"/>
    </location>
</feature>
<feature type="strand" evidence="14">
    <location>
        <begin position="2495"/>
        <end position="2497"/>
    </location>
</feature>
<feature type="strand" evidence="14">
    <location>
        <begin position="2503"/>
        <end position="2505"/>
    </location>
</feature>
<feature type="turn" evidence="14">
    <location>
        <begin position="2512"/>
        <end position="2514"/>
    </location>
</feature>
<feature type="helix" evidence="13">
    <location>
        <begin position="2518"/>
        <end position="2527"/>
    </location>
</feature>
<feature type="helix" evidence="13">
    <location>
        <begin position="2538"/>
        <end position="2554"/>
    </location>
</feature>
<feature type="turn" evidence="13">
    <location>
        <begin position="2560"/>
        <end position="2562"/>
    </location>
</feature>
<feature type="strand" evidence="13">
    <location>
        <begin position="2564"/>
        <end position="2569"/>
    </location>
</feature>
<feature type="helix" evidence="13">
    <location>
        <begin position="2570"/>
        <end position="2584"/>
    </location>
</feature>
<feature type="turn" evidence="14">
    <location>
        <begin position="2585"/>
        <end position="2587"/>
    </location>
</feature>
<feature type="helix" evidence="13">
    <location>
        <begin position="2592"/>
        <end position="2597"/>
    </location>
</feature>
<feature type="strand" evidence="13">
    <location>
        <begin position="2606"/>
        <end position="2608"/>
    </location>
</feature>
<feature type="strand" evidence="14">
    <location>
        <begin position="2640"/>
        <end position="2643"/>
    </location>
</feature>
<feature type="strand" evidence="14">
    <location>
        <begin position="2648"/>
        <end position="2653"/>
    </location>
</feature>
<feature type="helix" evidence="13">
    <location>
        <begin position="2655"/>
        <end position="2662"/>
    </location>
</feature>
<feature type="strand" evidence="14">
    <location>
        <begin position="2671"/>
        <end position="2674"/>
    </location>
</feature>
<feature type="strand" evidence="13">
    <location>
        <begin position="2675"/>
        <end position="2677"/>
    </location>
</feature>
<feature type="strand" evidence="13">
    <location>
        <begin position="2679"/>
        <end position="2681"/>
    </location>
</feature>
<feature type="strand" evidence="14">
    <location>
        <begin position="2696"/>
        <end position="2699"/>
    </location>
</feature>
<feature type="helix" evidence="13">
    <location>
        <begin position="2701"/>
        <end position="2703"/>
    </location>
</feature>
<feature type="strand" evidence="14">
    <location>
        <begin position="2704"/>
        <end position="2707"/>
    </location>
</feature>
<feature type="strand" evidence="13">
    <location>
        <begin position="2713"/>
        <end position="2715"/>
    </location>
</feature>
<feature type="helix" evidence="13">
    <location>
        <begin position="2726"/>
        <end position="2728"/>
    </location>
</feature>
<feature type="strand" evidence="13">
    <location>
        <begin position="2731"/>
        <end position="2733"/>
    </location>
</feature>
<feature type="strand" evidence="13">
    <location>
        <begin position="2736"/>
        <end position="2746"/>
    </location>
</feature>
<feature type="strand" evidence="14">
    <location>
        <begin position="2751"/>
        <end position="2754"/>
    </location>
</feature>
<feature type="strand" evidence="13">
    <location>
        <begin position="2756"/>
        <end position="2758"/>
    </location>
</feature>
<feature type="strand" evidence="14">
    <location>
        <begin position="2760"/>
        <end position="2763"/>
    </location>
</feature>
<feature type="helix" evidence="13">
    <location>
        <begin position="2767"/>
        <end position="2778"/>
    </location>
</feature>
<feature type="helix" evidence="13">
    <location>
        <begin position="2782"/>
        <end position="2791"/>
    </location>
</feature>
<feature type="helix" evidence="13">
    <location>
        <begin position="2813"/>
        <end position="2817"/>
    </location>
</feature>
<feature type="helix" evidence="13">
    <location>
        <begin position="2822"/>
        <end position="2830"/>
    </location>
</feature>
<feature type="strand" evidence="13">
    <location>
        <begin position="2833"/>
        <end position="2835"/>
    </location>
</feature>
<feature type="turn" evidence="13">
    <location>
        <begin position="2836"/>
        <end position="2840"/>
    </location>
</feature>
<feature type="strand" evidence="13">
    <location>
        <begin position="2848"/>
        <end position="2850"/>
    </location>
</feature>
<feature type="turn" evidence="13">
    <location>
        <begin position="2851"/>
        <end position="2853"/>
    </location>
</feature>
<feature type="helix" evidence="13">
    <location>
        <begin position="2855"/>
        <end position="2858"/>
    </location>
</feature>
<feature type="helix" evidence="13">
    <location>
        <begin position="2861"/>
        <end position="2871"/>
    </location>
</feature>
<feature type="helix" evidence="13">
    <location>
        <begin position="2873"/>
        <end position="2876"/>
    </location>
</feature>
<feature type="turn" evidence="13">
    <location>
        <begin position="2877"/>
        <end position="2881"/>
    </location>
</feature>
<feature type="strand" evidence="13">
    <location>
        <begin position="2889"/>
        <end position="2900"/>
    </location>
</feature>
<feature type="strand" evidence="13">
    <location>
        <begin position="2904"/>
        <end position="2910"/>
    </location>
</feature>
<feature type="helix" evidence="13">
    <location>
        <begin position="2913"/>
        <end position="2918"/>
    </location>
</feature>
<feature type="strand" evidence="13">
    <location>
        <begin position="2924"/>
        <end position="2930"/>
    </location>
</feature>
<feature type="strand" evidence="13">
    <location>
        <begin position="2938"/>
        <end position="2940"/>
    </location>
</feature>
<feature type="strand" evidence="13">
    <location>
        <begin position="2945"/>
        <end position="2957"/>
    </location>
</feature>
<feature type="helix" evidence="13">
    <location>
        <begin position="2961"/>
        <end position="2964"/>
    </location>
</feature>
<feature type="turn" evidence="13">
    <location>
        <begin position="2965"/>
        <end position="2967"/>
    </location>
</feature>
<feature type="helix" evidence="13">
    <location>
        <begin position="2977"/>
        <end position="2980"/>
    </location>
</feature>
<feature type="strand" evidence="13">
    <location>
        <begin position="2981"/>
        <end position="2983"/>
    </location>
</feature>
<feature type="turn" evidence="13">
    <location>
        <begin position="2986"/>
        <end position="2989"/>
    </location>
</feature>
<feature type="strand" evidence="13">
    <location>
        <begin position="2990"/>
        <end position="3001"/>
    </location>
</feature>
<feature type="strand" evidence="14">
    <location>
        <begin position="3004"/>
        <end position="3006"/>
    </location>
</feature>
<feature type="strand" evidence="13">
    <location>
        <begin position="3009"/>
        <end position="3013"/>
    </location>
</feature>
<feature type="strand" evidence="13">
    <location>
        <begin position="3015"/>
        <end position="3017"/>
    </location>
</feature>
<feature type="strand" evidence="13">
    <location>
        <begin position="3019"/>
        <end position="3026"/>
    </location>
</feature>
<feature type="strand" evidence="13">
    <location>
        <begin position="3037"/>
        <end position="3044"/>
    </location>
</feature>
<feature type="strand" evidence="13">
    <location>
        <begin position="3050"/>
        <end position="3052"/>
    </location>
</feature>
<feature type="strand" evidence="13">
    <location>
        <begin position="3056"/>
        <end position="3058"/>
    </location>
</feature>
<feature type="strand" evidence="13">
    <location>
        <begin position="3063"/>
        <end position="3067"/>
    </location>
</feature>
<feature type="turn" evidence="13">
    <location>
        <begin position="3071"/>
        <end position="3073"/>
    </location>
</feature>
<feature type="helix" evidence="13">
    <location>
        <begin position="3074"/>
        <end position="3080"/>
    </location>
</feature>
<feature type="helix" evidence="13">
    <location>
        <begin position="3082"/>
        <end position="3085"/>
    </location>
</feature>
<feature type="helix" evidence="13">
    <location>
        <begin position="3090"/>
        <end position="3102"/>
    </location>
</feature>
<evidence type="ECO:0000250" key="1"/>
<evidence type="ECO:0000250" key="2">
    <source>
        <dbReference type="UniProtKB" id="O35923"/>
    </source>
</evidence>
<evidence type="ECO:0000250" key="3">
    <source>
        <dbReference type="UniProtKB" id="P51587"/>
    </source>
</evidence>
<evidence type="ECO:0000256" key="4">
    <source>
        <dbReference type="SAM" id="MobiDB-lite"/>
    </source>
</evidence>
<evidence type="ECO:0000269" key="5">
    <source>
    </source>
</evidence>
<evidence type="ECO:0000269" key="6">
    <source>
    </source>
</evidence>
<evidence type="ECO:0000269" key="7">
    <source>
    </source>
</evidence>
<evidence type="ECO:0000269" key="8">
    <source>
    </source>
</evidence>
<evidence type="ECO:0000269" key="9">
    <source>
    </source>
</evidence>
<evidence type="ECO:0000269" key="10">
    <source>
    </source>
</evidence>
<evidence type="ECO:0000305" key="11"/>
<evidence type="ECO:0000312" key="12">
    <source>
        <dbReference type="MGI" id="MGI:109337"/>
    </source>
</evidence>
<evidence type="ECO:0007829" key="13">
    <source>
        <dbReference type="PDB" id="1MIU"/>
    </source>
</evidence>
<evidence type="ECO:0007829" key="14">
    <source>
        <dbReference type="PDB" id="1MJE"/>
    </source>
</evidence>
<proteinExistence type="evidence at protein level"/>
<gene>
    <name evidence="12" type="primary">Brca2</name>
    <name type="synonym">Fancd1</name>
</gene>
<protein>
    <recommendedName>
        <fullName evidence="11">Breast cancer type 2 susceptibility protein homolog</fullName>
    </recommendedName>
    <alternativeName>
        <fullName>Fanconi anemia group D1 protein homolog</fullName>
    </alternativeName>
</protein>
<dbReference type="EMBL" id="U82270">
    <property type="protein sequence ID" value="AAB48306.1"/>
    <property type="molecule type" value="mRNA"/>
</dbReference>
<dbReference type="EMBL" id="U65594">
    <property type="protein sequence ID" value="AAC23702.1"/>
    <property type="molecule type" value="mRNA"/>
</dbReference>
<dbReference type="EMBL" id="U89652">
    <property type="protein sequence ID" value="AAB71377.1"/>
    <property type="molecule type" value="mRNA"/>
</dbReference>
<dbReference type="EMBL" id="AC154885">
    <property type="status" value="NOT_ANNOTATED_CDS"/>
    <property type="molecule type" value="Genomic_DNA"/>
</dbReference>
<dbReference type="EMBL" id="U72947">
    <property type="protein sequence ID" value="AAB40720.1"/>
    <property type="molecule type" value="mRNA"/>
</dbReference>
<dbReference type="EMBL" id="U89503">
    <property type="protein sequence ID" value="AAC53276.1"/>
    <property type="molecule type" value="Genomic_DNA"/>
</dbReference>
<dbReference type="CCDS" id="CCDS39411.1"/>
<dbReference type="PIR" id="T30835">
    <property type="entry name" value="T30835"/>
</dbReference>
<dbReference type="PIR" id="T30904">
    <property type="entry name" value="T30904"/>
</dbReference>
<dbReference type="PIR" id="T42205">
    <property type="entry name" value="T42205"/>
</dbReference>
<dbReference type="RefSeq" id="NP_001074470.1">
    <property type="nucleotide sequence ID" value="NM_001081001.2"/>
</dbReference>
<dbReference type="RefSeq" id="NP_033895.2">
    <property type="nucleotide sequence ID" value="NM_009765.3"/>
</dbReference>
<dbReference type="RefSeq" id="XP_017176117.1">
    <property type="nucleotide sequence ID" value="XM_017320628.1"/>
</dbReference>
<dbReference type="RefSeq" id="XP_036020650.1">
    <property type="nucleotide sequence ID" value="XM_036164757.1"/>
</dbReference>
<dbReference type="PDB" id="1MIU">
    <property type="method" value="X-ray"/>
    <property type="resolution" value="3.10 A"/>
    <property type="chains" value="A=2378-3115"/>
</dbReference>
<dbReference type="PDB" id="1MJE">
    <property type="method" value="X-ray"/>
    <property type="resolution" value="3.50 A"/>
    <property type="chains" value="A=2378-3113"/>
</dbReference>
<dbReference type="PDBsum" id="1MIU"/>
<dbReference type="PDBsum" id="1MJE"/>
<dbReference type="SMR" id="P97929"/>
<dbReference type="BioGRID" id="198384">
    <property type="interactions" value="26"/>
</dbReference>
<dbReference type="ComplexPortal" id="CPX-972">
    <property type="entry name" value="BRCC ubiquitin ligase complex"/>
</dbReference>
<dbReference type="FunCoup" id="P97929">
    <property type="interactions" value="1000"/>
</dbReference>
<dbReference type="IntAct" id="P97929">
    <property type="interactions" value="2"/>
</dbReference>
<dbReference type="MINT" id="P97929"/>
<dbReference type="STRING" id="10090.ENSMUSP00000038576"/>
<dbReference type="GlyGen" id="P97929">
    <property type="glycosylation" value="2 sites"/>
</dbReference>
<dbReference type="iPTMnet" id="P97929"/>
<dbReference type="PhosphoSitePlus" id="P97929"/>
<dbReference type="jPOST" id="P97929"/>
<dbReference type="PaxDb" id="10090-ENSMUSP00000038576"/>
<dbReference type="PeptideAtlas" id="P97929"/>
<dbReference type="ProteomicsDB" id="273841"/>
<dbReference type="Antibodypedia" id="7788">
    <property type="antibodies" value="346 antibodies from 42 providers"/>
</dbReference>
<dbReference type="DNASU" id="12190"/>
<dbReference type="Ensembl" id="ENSMUST00000044620.11">
    <property type="protein sequence ID" value="ENSMUSP00000038576.8"/>
    <property type="gene ID" value="ENSMUSG00000041147.11"/>
</dbReference>
<dbReference type="Ensembl" id="ENSMUST00000202313.2">
    <property type="protein sequence ID" value="ENSMUSP00000144150.2"/>
    <property type="gene ID" value="ENSMUSG00000041147.11"/>
</dbReference>
<dbReference type="GeneID" id="12190"/>
<dbReference type="KEGG" id="mmu:12190"/>
<dbReference type="UCSC" id="uc009aty.2">
    <property type="organism name" value="mouse"/>
</dbReference>
<dbReference type="AGR" id="MGI:109337"/>
<dbReference type="CTD" id="675"/>
<dbReference type="MGI" id="MGI:109337">
    <property type="gene designation" value="Brca2"/>
</dbReference>
<dbReference type="VEuPathDB" id="HostDB:ENSMUSG00000041147"/>
<dbReference type="eggNOG" id="KOG4751">
    <property type="taxonomic scope" value="Eukaryota"/>
</dbReference>
<dbReference type="GeneTree" id="ENSGT00390000003602"/>
<dbReference type="HOGENOM" id="CLU_000344_0_0_1"/>
<dbReference type="InParanoid" id="P97929"/>
<dbReference type="OMA" id="CWYTKLG"/>
<dbReference type="OrthoDB" id="21095at2759"/>
<dbReference type="PhylomeDB" id="P97929"/>
<dbReference type="TreeFam" id="TF105041"/>
<dbReference type="Reactome" id="R-MMU-5685939">
    <property type="pathway name" value="HDR through MMEJ (alt-NHEJ)"/>
</dbReference>
<dbReference type="Reactome" id="R-MMU-5685942">
    <property type="pathway name" value="HDR through Homologous Recombination (HRR)"/>
</dbReference>
<dbReference type="Reactome" id="R-MMU-5693568">
    <property type="pathway name" value="Resolution of D-loop Structures through Holliday Junction Intermediates"/>
</dbReference>
<dbReference type="Reactome" id="R-MMU-5693579">
    <property type="pathway name" value="Homologous DNA Pairing and Strand Exchange"/>
</dbReference>
<dbReference type="Reactome" id="R-MMU-5693616">
    <property type="pathway name" value="Presynaptic phase of homologous DNA pairing and strand exchange"/>
</dbReference>
<dbReference type="BioGRID-ORCS" id="12190">
    <property type="hits" value="22 hits in 120 CRISPR screens"/>
</dbReference>
<dbReference type="ChiTaRS" id="Brca2">
    <property type="organism name" value="mouse"/>
</dbReference>
<dbReference type="EvolutionaryTrace" id="P97929"/>
<dbReference type="PRO" id="PR:P97929"/>
<dbReference type="Proteomes" id="UP000000589">
    <property type="component" value="Chromosome 5"/>
</dbReference>
<dbReference type="RNAct" id="P97929">
    <property type="molecule type" value="protein"/>
</dbReference>
<dbReference type="Bgee" id="ENSMUSG00000041147">
    <property type="expression patterns" value="Expressed in cleaving embryo and 196 other cell types or tissues"/>
</dbReference>
<dbReference type="ExpressionAtlas" id="P97929">
    <property type="expression patterns" value="baseline and differential"/>
</dbReference>
<dbReference type="GO" id="GO:0033593">
    <property type="term" value="C:BRCA2-MAGE-D1 complex"/>
    <property type="evidence" value="ECO:0007669"/>
    <property type="project" value="Ensembl"/>
</dbReference>
<dbReference type="GO" id="GO:0005813">
    <property type="term" value="C:centrosome"/>
    <property type="evidence" value="ECO:0000250"/>
    <property type="project" value="UniProtKB"/>
</dbReference>
<dbReference type="GO" id="GO:0005694">
    <property type="term" value="C:chromosome"/>
    <property type="evidence" value="ECO:0000314"/>
    <property type="project" value="UniProtKB"/>
</dbReference>
<dbReference type="GO" id="GO:0000781">
    <property type="term" value="C:chromosome, telomeric region"/>
    <property type="evidence" value="ECO:0007669"/>
    <property type="project" value="Ensembl"/>
</dbReference>
<dbReference type="GO" id="GO:0005737">
    <property type="term" value="C:cytoplasm"/>
    <property type="evidence" value="ECO:0000314"/>
    <property type="project" value="MGI"/>
</dbReference>
<dbReference type="GO" id="GO:0005829">
    <property type="term" value="C:cytosol"/>
    <property type="evidence" value="ECO:0007669"/>
    <property type="project" value="Ensembl"/>
</dbReference>
<dbReference type="GO" id="GO:1990391">
    <property type="term" value="C:DNA repair complex"/>
    <property type="evidence" value="ECO:0007669"/>
    <property type="project" value="Ensembl"/>
</dbReference>
<dbReference type="GO" id="GO:0000800">
    <property type="term" value="C:lateral element"/>
    <property type="evidence" value="ECO:0000266"/>
    <property type="project" value="MGI"/>
</dbReference>
<dbReference type="GO" id="GO:0000152">
    <property type="term" value="C:nuclear ubiquitin ligase complex"/>
    <property type="evidence" value="ECO:0000266"/>
    <property type="project" value="ComplexPortal"/>
</dbReference>
<dbReference type="GO" id="GO:0005654">
    <property type="term" value="C:nucleoplasm"/>
    <property type="evidence" value="ECO:0000304"/>
    <property type="project" value="Reactome"/>
</dbReference>
<dbReference type="GO" id="GO:0005634">
    <property type="term" value="C:nucleus"/>
    <property type="evidence" value="ECO:0000314"/>
    <property type="project" value="MGI"/>
</dbReference>
<dbReference type="GO" id="GO:0032991">
    <property type="term" value="C:protein-containing complex"/>
    <property type="evidence" value="ECO:0000266"/>
    <property type="project" value="MGI"/>
</dbReference>
<dbReference type="GO" id="GO:0030141">
    <property type="term" value="C:secretory granule"/>
    <property type="evidence" value="ECO:0007669"/>
    <property type="project" value="Ensembl"/>
</dbReference>
<dbReference type="GO" id="GO:0043015">
    <property type="term" value="F:gamma-tubulin binding"/>
    <property type="evidence" value="ECO:0007669"/>
    <property type="project" value="Ensembl"/>
</dbReference>
<dbReference type="GO" id="GO:0010484">
    <property type="term" value="F:histone H3 acetyltransferase activity"/>
    <property type="evidence" value="ECO:0007669"/>
    <property type="project" value="Ensembl"/>
</dbReference>
<dbReference type="GO" id="GO:0010485">
    <property type="term" value="F:histone H4 acetyltransferase activity"/>
    <property type="evidence" value="ECO:0007669"/>
    <property type="project" value="Ensembl"/>
</dbReference>
<dbReference type="GO" id="GO:0042802">
    <property type="term" value="F:identical protein binding"/>
    <property type="evidence" value="ECO:0007669"/>
    <property type="project" value="Ensembl"/>
</dbReference>
<dbReference type="GO" id="GO:0002020">
    <property type="term" value="F:protease binding"/>
    <property type="evidence" value="ECO:0007669"/>
    <property type="project" value="Ensembl"/>
</dbReference>
<dbReference type="GO" id="GO:0003697">
    <property type="term" value="F:single-stranded DNA binding"/>
    <property type="evidence" value="ECO:0007669"/>
    <property type="project" value="Ensembl"/>
</dbReference>
<dbReference type="GO" id="GO:0007420">
    <property type="term" value="P:brain development"/>
    <property type="evidence" value="ECO:0000315"/>
    <property type="project" value="MGI"/>
</dbReference>
<dbReference type="GO" id="GO:0008283">
    <property type="term" value="P:cell population proliferation"/>
    <property type="evidence" value="ECO:0000315"/>
    <property type="project" value="MGI"/>
</dbReference>
<dbReference type="GO" id="GO:0071479">
    <property type="term" value="P:cellular response to ionizing radiation"/>
    <property type="evidence" value="ECO:0000266"/>
    <property type="project" value="ComplexPortal"/>
</dbReference>
<dbReference type="GO" id="GO:0090398">
    <property type="term" value="P:cellular senescence"/>
    <property type="evidence" value="ECO:0000315"/>
    <property type="project" value="MGI"/>
</dbReference>
<dbReference type="GO" id="GO:0051298">
    <property type="term" value="P:centrosome duplication"/>
    <property type="evidence" value="ECO:0007669"/>
    <property type="project" value="Ensembl"/>
</dbReference>
<dbReference type="GO" id="GO:0043009">
    <property type="term" value="P:chordate embryonic development"/>
    <property type="evidence" value="ECO:0000315"/>
    <property type="project" value="MGI"/>
</dbReference>
<dbReference type="GO" id="GO:0051276">
    <property type="term" value="P:chromosome organization"/>
    <property type="evidence" value="ECO:0000315"/>
    <property type="project" value="MGI"/>
</dbReference>
<dbReference type="GO" id="GO:0006974">
    <property type="term" value="P:DNA damage response"/>
    <property type="evidence" value="ECO:0000314"/>
    <property type="project" value="UniProtKB"/>
</dbReference>
<dbReference type="GO" id="GO:0030330">
    <property type="term" value="P:DNA damage response, signal transduction by p53 class mediator"/>
    <property type="evidence" value="ECO:0000315"/>
    <property type="project" value="MGI"/>
</dbReference>
<dbReference type="GO" id="GO:0006302">
    <property type="term" value="P:double-strand break repair"/>
    <property type="evidence" value="ECO:0000315"/>
    <property type="project" value="MGI"/>
</dbReference>
<dbReference type="GO" id="GO:0000724">
    <property type="term" value="P:double-strand break repair via homologous recombination"/>
    <property type="evidence" value="ECO:0000315"/>
    <property type="project" value="MGI"/>
</dbReference>
<dbReference type="GO" id="GO:0070200">
    <property type="term" value="P:establishment of protein localization to telomere"/>
    <property type="evidence" value="ECO:0000314"/>
    <property type="project" value="BHF-UCL"/>
</dbReference>
<dbReference type="GO" id="GO:0008585">
    <property type="term" value="P:female gonad development"/>
    <property type="evidence" value="ECO:0000315"/>
    <property type="project" value="MGI"/>
</dbReference>
<dbReference type="GO" id="GO:0071425">
    <property type="term" value="P:hematopoietic stem cell proliferation"/>
    <property type="evidence" value="ECO:0000315"/>
    <property type="project" value="MGI"/>
</dbReference>
<dbReference type="GO" id="GO:0030097">
    <property type="term" value="P:hemopoiesis"/>
    <property type="evidence" value="ECO:0000315"/>
    <property type="project" value="MGI"/>
</dbReference>
<dbReference type="GO" id="GO:0001833">
    <property type="term" value="P:inner cell mass cell proliferation"/>
    <property type="evidence" value="ECO:0000315"/>
    <property type="project" value="MGI"/>
</dbReference>
<dbReference type="GO" id="GO:0008630">
    <property type="term" value="P:intrinsic apoptotic signaling pathway in response to DNA damage"/>
    <property type="evidence" value="ECO:0000316"/>
    <property type="project" value="MGI"/>
</dbReference>
<dbReference type="GO" id="GO:0042771">
    <property type="term" value="P:intrinsic apoptotic signaling pathway in response to DNA damage by p53 class mediator"/>
    <property type="evidence" value="ECO:0000315"/>
    <property type="project" value="MGI"/>
</dbReference>
<dbReference type="GO" id="GO:0007141">
    <property type="term" value="P:male meiosis I"/>
    <property type="evidence" value="ECO:0000314"/>
    <property type="project" value="UniProtKB"/>
</dbReference>
<dbReference type="GO" id="GO:1990426">
    <property type="term" value="P:mitotic recombination-dependent replication fork processing"/>
    <property type="evidence" value="ECO:0007669"/>
    <property type="project" value="Ensembl"/>
</dbReference>
<dbReference type="GO" id="GO:0033600">
    <property type="term" value="P:negative regulation of mammary gland epithelial cell proliferation"/>
    <property type="evidence" value="ECO:0007669"/>
    <property type="project" value="Ensembl"/>
</dbReference>
<dbReference type="GO" id="GO:0006289">
    <property type="term" value="P:nucleotide-excision repair"/>
    <property type="evidence" value="ECO:0007669"/>
    <property type="project" value="Ensembl"/>
</dbReference>
<dbReference type="GO" id="GO:0001556">
    <property type="term" value="P:oocyte maturation"/>
    <property type="evidence" value="ECO:0000315"/>
    <property type="project" value="MGI"/>
</dbReference>
<dbReference type="GO" id="GO:0045893">
    <property type="term" value="P:positive regulation of DNA-templated transcription"/>
    <property type="evidence" value="ECO:0007669"/>
    <property type="project" value="Ensembl"/>
</dbReference>
<dbReference type="GO" id="GO:0045931">
    <property type="term" value="P:positive regulation of mitotic cell cycle"/>
    <property type="evidence" value="ECO:0000315"/>
    <property type="project" value="MGI"/>
</dbReference>
<dbReference type="GO" id="GO:0032465">
    <property type="term" value="P:regulation of cytokinesis"/>
    <property type="evidence" value="ECO:0000315"/>
    <property type="project" value="MGI"/>
</dbReference>
<dbReference type="GO" id="GO:2000001">
    <property type="term" value="P:regulation of DNA damage checkpoint"/>
    <property type="evidence" value="ECO:0000303"/>
    <property type="project" value="ComplexPortal"/>
</dbReference>
<dbReference type="GO" id="GO:0031297">
    <property type="term" value="P:replication fork processing"/>
    <property type="evidence" value="ECO:0000315"/>
    <property type="project" value="MGI"/>
</dbReference>
<dbReference type="GO" id="GO:0010332">
    <property type="term" value="P:response to gamma radiation"/>
    <property type="evidence" value="ECO:0000315"/>
    <property type="project" value="MGI"/>
</dbReference>
<dbReference type="GO" id="GO:0010225">
    <property type="term" value="P:response to UV-C"/>
    <property type="evidence" value="ECO:0000315"/>
    <property type="project" value="MGI"/>
</dbReference>
<dbReference type="GO" id="GO:0010165">
    <property type="term" value="P:response to X-ray"/>
    <property type="evidence" value="ECO:0000315"/>
    <property type="project" value="MGI"/>
</dbReference>
<dbReference type="GO" id="GO:0007283">
    <property type="term" value="P:spermatogenesis"/>
    <property type="evidence" value="ECO:0000315"/>
    <property type="project" value="MGI"/>
</dbReference>
<dbReference type="GO" id="GO:0072089">
    <property type="term" value="P:stem cell proliferation"/>
    <property type="evidence" value="ECO:0000315"/>
    <property type="project" value="MGI"/>
</dbReference>
<dbReference type="GO" id="GO:0000722">
    <property type="term" value="P:telomere maintenance via recombination"/>
    <property type="evidence" value="ECO:0000316"/>
    <property type="project" value="BHF-UCL"/>
</dbReference>
<dbReference type="CDD" id="cd04493">
    <property type="entry name" value="BRCA2DBD_OB1"/>
    <property type="match status" value="1"/>
</dbReference>
<dbReference type="CDD" id="cd04494">
    <property type="entry name" value="BRCA2DBD_OB2"/>
    <property type="match status" value="1"/>
</dbReference>
<dbReference type="CDD" id="cd04495">
    <property type="entry name" value="BRCA2DBD_OB3"/>
    <property type="match status" value="1"/>
</dbReference>
<dbReference type="FunFam" id="2.40.50.140:FF:000205">
    <property type="entry name" value="Breast cancer susceptibility protein 2"/>
    <property type="match status" value="1"/>
</dbReference>
<dbReference type="FunFam" id="2.40.50.140:FF:000211">
    <property type="entry name" value="breast cancer type 2 susceptibility protein"/>
    <property type="match status" value="1"/>
</dbReference>
<dbReference type="Gene3D" id="6.10.70.10">
    <property type="match status" value="1"/>
</dbReference>
<dbReference type="Gene3D" id="2.40.50.140">
    <property type="entry name" value="Nucleic acid-binding proteins"/>
    <property type="match status" value="3"/>
</dbReference>
<dbReference type="IDEAL" id="IID50324"/>
<dbReference type="InterPro" id="IPR015525">
    <property type="entry name" value="BRCA2"/>
</dbReference>
<dbReference type="InterPro" id="IPR015252">
    <property type="entry name" value="BRCA2_hlx"/>
</dbReference>
<dbReference type="InterPro" id="IPR036315">
    <property type="entry name" value="BRCA2_hlx_sf"/>
</dbReference>
<dbReference type="InterPro" id="IPR015187">
    <property type="entry name" value="BRCA2_OB_1"/>
</dbReference>
<dbReference type="InterPro" id="IPR048262">
    <property type="entry name" value="BRCA2_OB_2_dom"/>
</dbReference>
<dbReference type="InterPro" id="IPR015188">
    <property type="entry name" value="BRCA2_OB_3"/>
</dbReference>
<dbReference type="InterPro" id="IPR002093">
    <property type="entry name" value="BRCA2_repeat"/>
</dbReference>
<dbReference type="InterPro" id="IPR055077">
    <property type="entry name" value="BRCA2_TR2"/>
</dbReference>
<dbReference type="InterPro" id="IPR012340">
    <property type="entry name" value="NA-bd_OB-fold"/>
</dbReference>
<dbReference type="InterPro" id="IPR015205">
    <property type="entry name" value="Tower_dom"/>
</dbReference>
<dbReference type="PANTHER" id="PTHR11289:SF0">
    <property type="entry name" value="BREAST CANCER TYPE 2 SUSCEPTIBILITY PROTEIN"/>
    <property type="match status" value="1"/>
</dbReference>
<dbReference type="PANTHER" id="PTHR11289">
    <property type="entry name" value="BREAST CANCER TYPE 2 SUSCEPTIBILITY PROTEIN BRCA2"/>
    <property type="match status" value="1"/>
</dbReference>
<dbReference type="Pfam" id="PF09169">
    <property type="entry name" value="BRCA-2_helical"/>
    <property type="match status" value="1"/>
</dbReference>
<dbReference type="Pfam" id="PF09103">
    <property type="entry name" value="BRCA-2_OB1"/>
    <property type="match status" value="1"/>
</dbReference>
<dbReference type="Pfam" id="PF09104">
    <property type="entry name" value="BRCA-2_OB3"/>
    <property type="match status" value="1"/>
</dbReference>
<dbReference type="Pfam" id="PF00634">
    <property type="entry name" value="BRCA2"/>
    <property type="match status" value="7"/>
</dbReference>
<dbReference type="Pfam" id="PF22687">
    <property type="entry name" value="BRCA2_TR2"/>
    <property type="match status" value="1"/>
</dbReference>
<dbReference type="Pfam" id="PF21318">
    <property type="entry name" value="BRCA2DBD_OB2"/>
    <property type="match status" value="1"/>
</dbReference>
<dbReference type="Pfam" id="PF09121">
    <property type="entry name" value="Tower"/>
    <property type="match status" value="1"/>
</dbReference>
<dbReference type="PIRSF" id="PIRSF002397">
    <property type="entry name" value="BRCA2"/>
    <property type="match status" value="1"/>
</dbReference>
<dbReference type="SMART" id="SM01341">
    <property type="entry name" value="Tower"/>
    <property type="match status" value="1"/>
</dbReference>
<dbReference type="SUPFAM" id="SSF81872">
    <property type="entry name" value="BRCA2 helical domain"/>
    <property type="match status" value="1"/>
</dbReference>
<dbReference type="SUPFAM" id="SSF81878">
    <property type="entry name" value="BRCA2 tower domain"/>
    <property type="match status" value="1"/>
</dbReference>
<dbReference type="SUPFAM" id="SSF50249">
    <property type="entry name" value="Nucleic acid-binding proteins"/>
    <property type="match status" value="3"/>
</dbReference>
<dbReference type="PROSITE" id="PS50138">
    <property type="entry name" value="BRCA2_REPEAT"/>
    <property type="match status" value="6"/>
</dbReference>
<comment type="function">
    <text evidence="2 3">Involved in double-strand break repair and/or homologous recombination. Binds RAD51 and potentiates recombinational DNA repair by promoting assembly of RAD51 onto single-stranded DNA (ssDNA). Acts by targeting RAD51 to ssDNA over double-stranded DNA, enabling RAD51 to displace replication protein-A (RPA) from ssDNA and stabilizing RAD51-ssDNA filaments by blocking ATP hydrolysis. Part of a PALB2-scaffolded HR complex containing RAD51C and which is thought to play a role in DNA repair by HR. May participate in S phase checkpoint activation. Binds selectively to ssDNA, and to ssDNA in tailed duplexes and replication fork structures. May play a role in the extension step after strand invasion at replication-dependent DNA double-strand breaks; together with PALB2 is involved in both POLH localization at collapsed replication forks and DNA polymerization activity. In concert with NPM1, regulates centrosome duplication. Interacts with the TREX-2 complex (transcription and export complex 2) subunits PCID2 and SEM1, and is required to prevent R-loop-associated DNA damage and thus transcription-associated genomic instability, independently of its known role in homologous recombination (By similarity).</text>
</comment>
<comment type="subunit">
    <text evidence="2 3 5 6 7 8 9 10">Monomer and dimer. Interacts with RAD51; regulates RAD51 recruitment and function at sites of DNA repair. Interacts with SEM1, WDR16, USP11, DMC1, ROCK2 and NPM1. Interacts with both nonubiquitinated and monoubiquitinated FANCD2; this complex also includes XRCC3 and phosphorylated FANCG. Part of a BRCA complex containing BRCA1, BRCA2 and PALB2. Component of the homologous recombination repair (HR) complex composed of ERCC5/XPG, BRCA2, PALB2, DSS1 and RAD51 (By similarity). Within the complex, interacts with ERCC5/XPG and PALB2 (By similarity). Interacts directly with PALB2 which may serve as a scaffold for a HR complex containing PALB2, BRCA2, RAD51C, RAD51 and XRCC3. Interacts with BRCA1 only in the presence of PALB2 which serves as the bridging protein. Interacts with POLH; the interaction is direct. Interacts with the TREX-2 complex subunits PCID2 and SEM1 (By similarity). Interacts with HSF2BP and BRME1; the interaction with HSF2BP is direct and allows the formation of a ternary complex (PubMed:30760716, PubMed:31242413, PubMed:32345962, PubMed:32460033, PubMed:32845237). The complex BRME1:HSF2BP:BRCA2 interacts with SPATA22, MEIOB and RAD51 (PubMed:30760716, PubMed:32345962).</text>
</comment>
<comment type="subcellular location">
    <subcellularLocation>
        <location evidence="3">Nucleus</location>
    </subcellularLocation>
    <subcellularLocation>
        <location evidence="3">Cytoplasm</location>
        <location evidence="3">Cytoskeleton</location>
        <location evidence="3">Microtubule organizing center</location>
        <location evidence="3">Centrosome</location>
    </subcellularLocation>
</comment>
<comment type="tissue specificity">
    <text evidence="9">Widely expressed. Highest expression in cerebellum, testis, ileum, appendix, epididymis, ovary and mammary gland. No expression in lung.</text>
</comment>
<comment type="developmental stage">
    <text>In the mammary gland, expression increases dramatically during pregnancy.</text>
</comment>
<comment type="PTM">
    <text evidence="3">Phosphorylated by ATM upon irradiation-induced DNA damage. Phosphorylation by CHEK1 and CHEK2 regulates interaction with RAD51. Phosphorylation at Ser-3291 by CDK1 and CDK2 is low in S phase when recombination is active, but increases as cells progress towards mitosis; this phosphorylation prevents homologous recombination-dependent repair during S phase and G2 by inhibiting RAD51 binding.</text>
</comment>
<comment type="PTM">
    <text evidence="3">Ubiquitinated in the absence of DNA damage; this does not lead to proteasomal degradation. In contrast, ubiquitination in response to DNA damage leads to proteasomal degradation.</text>
</comment>